<accession>P36935</accession>
<feature type="chain" id="PRO_0000165270" description="Uncharacterized 30.4 kDa protein in S-V intergenic region">
    <location>
        <begin position="1"/>
        <end position="261"/>
    </location>
</feature>
<proteinExistence type="predicted"/>
<name>YSV_BPP2</name>
<sequence length="261" mass="30424">MVSYNVTNVWGLIVFFLCSFAVLAFFSFGKSNLMRLIAHYFNFGYSDKKLKRLDREWRDIQLFKIINGINVSGIENVRMIQQGLIDGKLKTSYFFLTRIWGDITKPPHIIKTIIVILASIFYILLACYIHNEQSVIVRDATGIPYKNMMYYVYSDKVLLSFKNKAVEFNKTYSLADCKRLQNVFIKDTLPEIACNKLLQLNEEDSEWLSQEIKDNNSHKKALLILSLVYFTSGLVIFLSYTKFFYANKKVLEYKASNKNHS</sequence>
<organismHost>
    <name type="scientific">Enterobacteriaceae</name>
    <dbReference type="NCBI Taxonomy" id="543"/>
</organismHost>
<reference key="1">
    <citation type="journal article" date="1994" name="Virology">
        <title>Molecular cloning and characterization of bacteriophage P2 genes R and S involved in tail completion.</title>
        <authorList>
            <person name="Linderoth N.A."/>
            <person name="Julien B."/>
            <person name="Flick K.E."/>
            <person name="Calendar R."/>
            <person name="Christie G.E."/>
        </authorList>
    </citation>
    <scope>NUCLEOTIDE SEQUENCE [GENOMIC DNA]</scope>
</reference>
<protein>
    <recommendedName>
        <fullName>Uncharacterized 30.4 kDa protein in S-V intergenic region</fullName>
    </recommendedName>
    <alternativeName>
        <fullName>ORF-30</fullName>
    </alternativeName>
</protein>
<organism>
    <name type="scientific">Escherichia phage P2</name>
    <name type="common">Bacteriophage P2</name>
    <dbReference type="NCBI Taxonomy" id="2905681"/>
    <lineage>
        <taxon>Viruses</taxon>
        <taxon>Duplodnaviria</taxon>
        <taxon>Heunggongvirae</taxon>
        <taxon>Uroviricota</taxon>
        <taxon>Caudoviricetes</taxon>
        <taxon>Peduoviridae</taxon>
        <taxon>Peduovirus</taxon>
        <taxon>Peduovirus P2</taxon>
    </lineage>
</organism>
<dbReference type="EMBL" id="AF063097">
    <property type="protein sequence ID" value="AAD03281.1"/>
    <property type="molecule type" value="Genomic_DNA"/>
</dbReference>
<dbReference type="RefSeq" id="NP_046770.1">
    <property type="nucleotide sequence ID" value="NC_001895.1"/>
</dbReference>
<dbReference type="GeneID" id="77440802"/>
<dbReference type="KEGG" id="vg:77440802"/>
<dbReference type="Proteomes" id="UP000009092">
    <property type="component" value="Genome"/>
</dbReference>
<keyword id="KW-1185">Reference proteome</keyword>